<reference key="1">
    <citation type="journal article" date="2002" name="Nucleic Acids Res.">
        <title>Genome sequence of Oceanobacillus iheyensis isolated from the Iheya Ridge and its unexpected adaptive capabilities to extreme environments.</title>
        <authorList>
            <person name="Takami H."/>
            <person name="Takaki Y."/>
            <person name="Uchiyama I."/>
        </authorList>
    </citation>
    <scope>NUCLEOTIDE SEQUENCE [LARGE SCALE GENOMIC DNA]</scope>
    <source>
        <strain>DSM 14371 / CIP 107618 / JCM 11309 / KCTC 3954 / HTE831</strain>
    </source>
</reference>
<sequence>MVHPFNRIFGKSDKENIDTDEVEYSTDEVIQIKVDNIHPNRYQPRTIFQEEKIKELAQTIHTHGMIQPIVVRKLEDEDTYELIAGERRWRAVQHLGWEQVSAIIRDMTDTETASVALIENLQREELTVIEEAIAYSKLLELHSLTQEALAQRLGKNQSTVANKLRLLKLPEEVQTALLDKAISERHARALIKLKQEDQQIAVLHEILEKGLNVKQTEDRIAQINEPKEKKKPKPKFKGVNKDIRIAMNTIRQSLNMVSDTGVEVESDEKELDDYYQITIKIPKKNQ</sequence>
<comment type="function">
    <text evidence="1">Effects nucleoid occlusion by binding relatively nonspecifically to DNA and preventing the assembly of the division machinery in the vicinity of the nucleoid, especially under conditions that disturb the cell cycle. It helps to coordinate cell division and chromosome segregation by preventing the formation of the Z ring through the nucleoid, which would cause chromosome breakage.</text>
</comment>
<comment type="subcellular location">
    <subcellularLocation>
        <location evidence="1">Cytoplasm</location>
        <location evidence="1">Nucleoid</location>
    </subcellularLocation>
</comment>
<comment type="similarity">
    <text evidence="1">Belongs to the ParB family.</text>
</comment>
<keyword id="KW-0131">Cell cycle</keyword>
<keyword id="KW-0132">Cell division</keyword>
<keyword id="KW-0963">Cytoplasm</keyword>
<keyword id="KW-0238">DNA-binding</keyword>
<keyword id="KW-1185">Reference proteome</keyword>
<keyword id="KW-0717">Septation</keyword>
<organism>
    <name type="scientific">Oceanobacillus iheyensis (strain DSM 14371 / CIP 107618 / JCM 11309 / KCTC 3954 / HTE831)</name>
    <dbReference type="NCBI Taxonomy" id="221109"/>
    <lineage>
        <taxon>Bacteria</taxon>
        <taxon>Bacillati</taxon>
        <taxon>Bacillota</taxon>
        <taxon>Bacilli</taxon>
        <taxon>Bacillales</taxon>
        <taxon>Bacillaceae</taxon>
        <taxon>Oceanobacillus</taxon>
    </lineage>
</organism>
<gene>
    <name evidence="1" type="primary">noc</name>
    <name type="ordered locus">OB3488</name>
</gene>
<accession>Q8EKU5</accession>
<feature type="chain" id="PRO_0000346636" description="Nucleoid occlusion protein">
    <location>
        <begin position="1"/>
        <end position="286"/>
    </location>
</feature>
<feature type="DNA-binding region" description="H-T-H motif" evidence="1">
    <location>
        <begin position="147"/>
        <end position="166"/>
    </location>
</feature>
<protein>
    <recommendedName>
        <fullName evidence="1">Nucleoid occlusion protein</fullName>
        <shortName evidence="1">Noc</shortName>
    </recommendedName>
</protein>
<dbReference type="EMBL" id="BA000028">
    <property type="protein sequence ID" value="BAC15444.1"/>
    <property type="molecule type" value="Genomic_DNA"/>
</dbReference>
<dbReference type="RefSeq" id="WP_011067886.1">
    <property type="nucleotide sequence ID" value="NC_004193.1"/>
</dbReference>
<dbReference type="SMR" id="Q8EKU5"/>
<dbReference type="STRING" id="221109.gene:10735740"/>
<dbReference type="KEGG" id="oih:OB3488"/>
<dbReference type="eggNOG" id="COG1475">
    <property type="taxonomic scope" value="Bacteria"/>
</dbReference>
<dbReference type="HOGENOM" id="CLU_023853_0_1_9"/>
<dbReference type="OrthoDB" id="9802051at2"/>
<dbReference type="PhylomeDB" id="Q8EKU5"/>
<dbReference type="Proteomes" id="UP000000822">
    <property type="component" value="Chromosome"/>
</dbReference>
<dbReference type="GO" id="GO:0005694">
    <property type="term" value="C:chromosome"/>
    <property type="evidence" value="ECO:0007669"/>
    <property type="project" value="TreeGrafter"/>
</dbReference>
<dbReference type="GO" id="GO:0005737">
    <property type="term" value="C:cytoplasm"/>
    <property type="evidence" value="ECO:0007669"/>
    <property type="project" value="UniProtKB-UniRule"/>
</dbReference>
<dbReference type="GO" id="GO:0009295">
    <property type="term" value="C:nucleoid"/>
    <property type="evidence" value="ECO:0007669"/>
    <property type="project" value="UniProtKB-SubCell"/>
</dbReference>
<dbReference type="GO" id="GO:0003677">
    <property type="term" value="F:DNA binding"/>
    <property type="evidence" value="ECO:0007669"/>
    <property type="project" value="UniProtKB-UniRule"/>
</dbReference>
<dbReference type="GO" id="GO:0007059">
    <property type="term" value="P:chromosome segregation"/>
    <property type="evidence" value="ECO:0007669"/>
    <property type="project" value="TreeGrafter"/>
</dbReference>
<dbReference type="GO" id="GO:0000917">
    <property type="term" value="P:division septum assembly"/>
    <property type="evidence" value="ECO:0007669"/>
    <property type="project" value="UniProtKB-KW"/>
</dbReference>
<dbReference type="GO" id="GO:0045881">
    <property type="term" value="P:positive regulation of sporulation resulting in formation of a cellular spore"/>
    <property type="evidence" value="ECO:0007669"/>
    <property type="project" value="TreeGrafter"/>
</dbReference>
<dbReference type="CDD" id="cd16393">
    <property type="entry name" value="SPO0J_N"/>
    <property type="match status" value="1"/>
</dbReference>
<dbReference type="FunFam" id="1.10.10.2830:FF:000001">
    <property type="entry name" value="Chromosome partitioning protein ParB"/>
    <property type="match status" value="1"/>
</dbReference>
<dbReference type="FunFam" id="3.90.1530.30:FF:000001">
    <property type="entry name" value="Chromosome partitioning protein ParB"/>
    <property type="match status" value="1"/>
</dbReference>
<dbReference type="Gene3D" id="1.10.10.2830">
    <property type="match status" value="1"/>
</dbReference>
<dbReference type="Gene3D" id="3.90.1530.30">
    <property type="match status" value="1"/>
</dbReference>
<dbReference type="HAMAP" id="MF_02015">
    <property type="entry name" value="ParB_Noc"/>
    <property type="match status" value="1"/>
</dbReference>
<dbReference type="InterPro" id="IPR050336">
    <property type="entry name" value="Chromosome_partition/occlusion"/>
</dbReference>
<dbReference type="InterPro" id="IPR041468">
    <property type="entry name" value="HTH_ParB/Spo0J"/>
</dbReference>
<dbReference type="InterPro" id="IPR023705">
    <property type="entry name" value="Nucleoid_occlusion_protein"/>
</dbReference>
<dbReference type="InterPro" id="IPR004437">
    <property type="entry name" value="ParB/RepB/Spo0J"/>
</dbReference>
<dbReference type="InterPro" id="IPR003115">
    <property type="entry name" value="ParB/Sulfiredoxin_dom"/>
</dbReference>
<dbReference type="InterPro" id="IPR036086">
    <property type="entry name" value="ParB/Sulfiredoxin_sf"/>
</dbReference>
<dbReference type="NCBIfam" id="TIGR04285">
    <property type="entry name" value="nucleoid_noc"/>
    <property type="match status" value="1"/>
</dbReference>
<dbReference type="NCBIfam" id="TIGR00180">
    <property type="entry name" value="parB_part"/>
    <property type="match status" value="1"/>
</dbReference>
<dbReference type="PANTHER" id="PTHR33375">
    <property type="entry name" value="CHROMOSOME-PARTITIONING PROTEIN PARB-RELATED"/>
    <property type="match status" value="1"/>
</dbReference>
<dbReference type="PANTHER" id="PTHR33375:SF8">
    <property type="entry name" value="NUCLEOID OCCLUSION PROTEIN"/>
    <property type="match status" value="1"/>
</dbReference>
<dbReference type="Pfam" id="PF17762">
    <property type="entry name" value="HTH_ParB"/>
    <property type="match status" value="1"/>
</dbReference>
<dbReference type="Pfam" id="PF02195">
    <property type="entry name" value="ParBc"/>
    <property type="match status" value="1"/>
</dbReference>
<dbReference type="SMART" id="SM00470">
    <property type="entry name" value="ParB"/>
    <property type="match status" value="1"/>
</dbReference>
<dbReference type="SUPFAM" id="SSF109709">
    <property type="entry name" value="KorB DNA-binding domain-like"/>
    <property type="match status" value="1"/>
</dbReference>
<dbReference type="SUPFAM" id="SSF110849">
    <property type="entry name" value="ParB/Sulfiredoxin"/>
    <property type="match status" value="1"/>
</dbReference>
<name>NOC_OCEIH</name>
<proteinExistence type="inferred from homology"/>
<evidence type="ECO:0000255" key="1">
    <source>
        <dbReference type="HAMAP-Rule" id="MF_02015"/>
    </source>
</evidence>